<name>HBA_PANPA</name>
<protein>
    <recommendedName>
        <fullName>Hemoglobin subunit alpha</fullName>
    </recommendedName>
    <alternativeName>
        <fullName>Alpha-globin</fullName>
    </alternativeName>
    <alternativeName>
        <fullName>Hemoglobin alpha chain</fullName>
    </alternativeName>
    <component>
        <recommendedName>
            <fullName evidence="2">Hemopressin</fullName>
        </recommendedName>
    </component>
</protein>
<proteinExistence type="evidence at protein level"/>
<reference key="1">
    <citation type="journal article" date="1983" name="Nature">
        <title>Evidence on human origins from haemoglobins of African apes.</title>
        <authorList>
            <person name="Goodman M."/>
            <person name="Braunitzer G."/>
            <person name="Stangl A."/>
            <person name="Schrank B."/>
        </authorList>
    </citation>
    <scope>PROTEIN SEQUENCE OF 2-142</scope>
</reference>
<accession>P69906</accession>
<accession>P01922</accession>
<evidence type="ECO:0000250" key="1">
    <source>
        <dbReference type="UniProtKB" id="P01942"/>
    </source>
</evidence>
<evidence type="ECO:0000250" key="2">
    <source>
        <dbReference type="UniProtKB" id="P01946"/>
    </source>
</evidence>
<evidence type="ECO:0000250" key="3">
    <source>
        <dbReference type="UniProtKB" id="P69905"/>
    </source>
</evidence>
<evidence type="ECO:0000255" key="4">
    <source>
        <dbReference type="PROSITE-ProRule" id="PRU00238"/>
    </source>
</evidence>
<evidence type="ECO:0000269" key="5">
    <source>
    </source>
</evidence>
<comment type="function">
    <text>Involved in oxygen transport from the lung to the various peripheral tissues.</text>
</comment>
<comment type="function">
    <molecule>Hemopressin</molecule>
    <text evidence="2">Hemopressin acts as an antagonist peptide of the cannabinoid receptor CNR1. Hemopressin-binding efficiently blocks cannabinoid receptor CNR1 and subsequent signaling.</text>
</comment>
<comment type="subunit">
    <text>Heterotetramer of two alpha chains and two beta chains in adult hemoglobin A (HbA); two alpha chains and two delta chains in adult hemoglobin A2 (HbA2); two alpha chains and two epsilon chains in early embryonic hemoglobin Gower-2; two alpha chains and two gamma chains in fetal hemoglobin F (HbF).</text>
</comment>
<comment type="tissue specificity">
    <text>Red blood cells.</text>
</comment>
<comment type="miscellaneous">
    <text>Gives blood its red color.</text>
</comment>
<comment type="similarity">
    <text evidence="4">Belongs to the globin family.</text>
</comment>
<feature type="initiator methionine" description="Removed" evidence="5">
    <location>
        <position position="1"/>
    </location>
</feature>
<feature type="chain" id="PRO_0000052717" description="Hemoglobin subunit alpha">
    <location>
        <begin position="2"/>
        <end position="142"/>
    </location>
</feature>
<feature type="peptide" id="PRO_0000455917" description="Hemopressin" evidence="2">
    <location>
        <begin position="96"/>
        <end position="104"/>
    </location>
</feature>
<feature type="domain" description="Globin" evidence="4">
    <location>
        <begin position="2"/>
        <end position="142"/>
    </location>
</feature>
<feature type="binding site" evidence="4">
    <location>
        <position position="59"/>
    </location>
    <ligand>
        <name>O2</name>
        <dbReference type="ChEBI" id="CHEBI:15379"/>
    </ligand>
</feature>
<feature type="binding site" description="proximal binding residue" evidence="4">
    <location>
        <position position="88"/>
    </location>
    <ligand>
        <name>heme b</name>
        <dbReference type="ChEBI" id="CHEBI:60344"/>
    </ligand>
    <ligandPart>
        <name>Fe</name>
        <dbReference type="ChEBI" id="CHEBI:18248"/>
    </ligandPart>
</feature>
<feature type="modified residue" description="Phosphoserine" evidence="3">
    <location>
        <position position="4"/>
    </location>
</feature>
<feature type="modified residue" description="N6-succinyllysine" evidence="1">
    <location>
        <position position="8"/>
    </location>
</feature>
<feature type="modified residue" description="Phosphothreonine" evidence="3">
    <location>
        <position position="9"/>
    </location>
</feature>
<feature type="modified residue" description="N6-succinyllysine" evidence="1">
    <location>
        <position position="12"/>
    </location>
</feature>
<feature type="modified residue" description="N6-acetyllysine; alternate" evidence="3">
    <location>
        <position position="17"/>
    </location>
</feature>
<feature type="modified residue" description="N6-succinyllysine; alternate" evidence="1">
    <location>
        <position position="17"/>
    </location>
</feature>
<feature type="modified residue" description="Phosphotyrosine" evidence="3">
    <location>
        <position position="25"/>
    </location>
</feature>
<feature type="modified residue" description="Phosphoserine" evidence="3">
    <location>
        <position position="36"/>
    </location>
</feature>
<feature type="modified residue" description="N6-succinyllysine" evidence="1">
    <location>
        <position position="41"/>
    </location>
</feature>
<feature type="modified residue" description="Phosphoserine" evidence="3">
    <location>
        <position position="50"/>
    </location>
</feature>
<feature type="modified residue" description="Phosphoserine" evidence="1">
    <location>
        <position position="103"/>
    </location>
</feature>
<feature type="modified residue" description="Phosphothreonine" evidence="1">
    <location>
        <position position="109"/>
    </location>
</feature>
<feature type="modified residue" description="Phosphoserine" evidence="1">
    <location>
        <position position="125"/>
    </location>
</feature>
<feature type="modified residue" description="Phosphoserine" evidence="1">
    <location>
        <position position="132"/>
    </location>
</feature>
<feature type="modified residue" description="Phosphothreonine" evidence="1">
    <location>
        <position position="135"/>
    </location>
</feature>
<feature type="modified residue" description="Phosphothreonine" evidence="1">
    <location>
        <position position="138"/>
    </location>
</feature>
<feature type="modified residue" description="Phosphoserine" evidence="1">
    <location>
        <position position="139"/>
    </location>
</feature>
<keyword id="KW-0007">Acetylation</keyword>
<keyword id="KW-0903">Direct protein sequencing</keyword>
<keyword id="KW-0349">Heme</keyword>
<keyword id="KW-0408">Iron</keyword>
<keyword id="KW-0479">Metal-binding</keyword>
<keyword id="KW-0561">Oxygen transport</keyword>
<keyword id="KW-0597">Phosphoprotein</keyword>
<keyword id="KW-1185">Reference proteome</keyword>
<keyword id="KW-0813">Transport</keyword>
<dbReference type="PIR" id="C93303">
    <property type="entry name" value="HACZP"/>
</dbReference>
<dbReference type="RefSeq" id="XP_003809438.1">
    <property type="nucleotide sequence ID" value="XM_003809390.6"/>
</dbReference>
<dbReference type="SMR" id="P69906"/>
<dbReference type="IntAct" id="P69906">
    <property type="interactions" value="2"/>
</dbReference>
<dbReference type="STRING" id="9597.ENSPPAP00000008258"/>
<dbReference type="Ensembl" id="ENSPPAT00000030893.1">
    <property type="protein sequence ID" value="ENSPPAP00000008258.1"/>
    <property type="gene ID" value="ENSPPAG00000027365.1"/>
</dbReference>
<dbReference type="GeneID" id="100983142"/>
<dbReference type="KEGG" id="pps:100983142"/>
<dbReference type="CTD" id="3039"/>
<dbReference type="eggNOG" id="KOG3378">
    <property type="taxonomic scope" value="Eukaryota"/>
</dbReference>
<dbReference type="GeneTree" id="ENSGT00940000154590"/>
<dbReference type="OMA" id="MFTSFPT"/>
<dbReference type="OrthoDB" id="8598at9604"/>
<dbReference type="Proteomes" id="UP000240080">
    <property type="component" value="Chromosome 16"/>
</dbReference>
<dbReference type="Bgee" id="ENSPPAG00000027365">
    <property type="expression patterns" value="Expressed in placenta and 6 other cell types or tissues"/>
</dbReference>
<dbReference type="GO" id="GO:0072562">
    <property type="term" value="C:blood microparticle"/>
    <property type="evidence" value="ECO:0007669"/>
    <property type="project" value="TreeGrafter"/>
</dbReference>
<dbReference type="GO" id="GO:0031838">
    <property type="term" value="C:haptoglobin-hemoglobin complex"/>
    <property type="evidence" value="ECO:0007669"/>
    <property type="project" value="Ensembl"/>
</dbReference>
<dbReference type="GO" id="GO:0005833">
    <property type="term" value="C:hemoglobin complex"/>
    <property type="evidence" value="ECO:0007669"/>
    <property type="project" value="Ensembl"/>
</dbReference>
<dbReference type="GO" id="GO:0031720">
    <property type="term" value="F:haptoglobin binding"/>
    <property type="evidence" value="ECO:0007669"/>
    <property type="project" value="Ensembl"/>
</dbReference>
<dbReference type="GO" id="GO:0020037">
    <property type="term" value="F:heme binding"/>
    <property type="evidence" value="ECO:0007669"/>
    <property type="project" value="InterPro"/>
</dbReference>
<dbReference type="GO" id="GO:0005506">
    <property type="term" value="F:iron ion binding"/>
    <property type="evidence" value="ECO:0007669"/>
    <property type="project" value="InterPro"/>
</dbReference>
<dbReference type="GO" id="GO:0043177">
    <property type="term" value="F:organic acid binding"/>
    <property type="evidence" value="ECO:0007669"/>
    <property type="project" value="TreeGrafter"/>
</dbReference>
<dbReference type="GO" id="GO:0019825">
    <property type="term" value="F:oxygen binding"/>
    <property type="evidence" value="ECO:0007669"/>
    <property type="project" value="InterPro"/>
</dbReference>
<dbReference type="GO" id="GO:0005344">
    <property type="term" value="F:oxygen carrier activity"/>
    <property type="evidence" value="ECO:0007669"/>
    <property type="project" value="UniProtKB-KW"/>
</dbReference>
<dbReference type="GO" id="GO:0004601">
    <property type="term" value="F:peroxidase activity"/>
    <property type="evidence" value="ECO:0007669"/>
    <property type="project" value="Ensembl"/>
</dbReference>
<dbReference type="GO" id="GO:0042744">
    <property type="term" value="P:hydrogen peroxide catabolic process"/>
    <property type="evidence" value="ECO:0007669"/>
    <property type="project" value="Ensembl"/>
</dbReference>
<dbReference type="GO" id="GO:0030185">
    <property type="term" value="P:nitric oxide transport"/>
    <property type="evidence" value="ECO:0007669"/>
    <property type="project" value="Ensembl"/>
</dbReference>
<dbReference type="GO" id="GO:0042542">
    <property type="term" value="P:response to hydrogen peroxide"/>
    <property type="evidence" value="ECO:0007669"/>
    <property type="project" value="Ensembl"/>
</dbReference>
<dbReference type="CDD" id="cd08927">
    <property type="entry name" value="Hb-alpha-like"/>
    <property type="match status" value="1"/>
</dbReference>
<dbReference type="FunFam" id="1.10.490.10:FF:000002">
    <property type="entry name" value="Hemoglobin subunit alpha"/>
    <property type="match status" value="1"/>
</dbReference>
<dbReference type="Gene3D" id="1.10.490.10">
    <property type="entry name" value="Globins"/>
    <property type="match status" value="1"/>
</dbReference>
<dbReference type="InterPro" id="IPR000971">
    <property type="entry name" value="Globin"/>
</dbReference>
<dbReference type="InterPro" id="IPR009050">
    <property type="entry name" value="Globin-like_sf"/>
</dbReference>
<dbReference type="InterPro" id="IPR012292">
    <property type="entry name" value="Globin/Proto"/>
</dbReference>
<dbReference type="InterPro" id="IPR002338">
    <property type="entry name" value="Hemoglobin_a-typ"/>
</dbReference>
<dbReference type="InterPro" id="IPR050056">
    <property type="entry name" value="Hemoglobin_oxygen_transport"/>
</dbReference>
<dbReference type="InterPro" id="IPR002339">
    <property type="entry name" value="Hemoglobin_pi"/>
</dbReference>
<dbReference type="PANTHER" id="PTHR11442">
    <property type="entry name" value="HEMOGLOBIN FAMILY MEMBER"/>
    <property type="match status" value="1"/>
</dbReference>
<dbReference type="PANTHER" id="PTHR11442:SF48">
    <property type="entry name" value="HEMOGLOBIN SUBUNIT ALPHA"/>
    <property type="match status" value="1"/>
</dbReference>
<dbReference type="Pfam" id="PF00042">
    <property type="entry name" value="Globin"/>
    <property type="match status" value="1"/>
</dbReference>
<dbReference type="PRINTS" id="PR00612">
    <property type="entry name" value="ALPHAHAEM"/>
</dbReference>
<dbReference type="PRINTS" id="PR00815">
    <property type="entry name" value="PIHAEM"/>
</dbReference>
<dbReference type="SUPFAM" id="SSF46458">
    <property type="entry name" value="Globin-like"/>
    <property type="match status" value="1"/>
</dbReference>
<dbReference type="PROSITE" id="PS01033">
    <property type="entry name" value="GLOBIN"/>
    <property type="match status" value="1"/>
</dbReference>
<organism>
    <name type="scientific">Pan paniscus</name>
    <name type="common">Pygmy chimpanzee</name>
    <name type="synonym">Bonobo</name>
    <dbReference type="NCBI Taxonomy" id="9597"/>
    <lineage>
        <taxon>Eukaryota</taxon>
        <taxon>Metazoa</taxon>
        <taxon>Chordata</taxon>
        <taxon>Craniata</taxon>
        <taxon>Vertebrata</taxon>
        <taxon>Euteleostomi</taxon>
        <taxon>Mammalia</taxon>
        <taxon>Eutheria</taxon>
        <taxon>Euarchontoglires</taxon>
        <taxon>Primates</taxon>
        <taxon>Haplorrhini</taxon>
        <taxon>Catarrhini</taxon>
        <taxon>Hominidae</taxon>
        <taxon>Pan</taxon>
    </lineage>
</organism>
<gene>
    <name type="primary">HBA1</name>
</gene>
<gene>
    <name type="primary">HBA2</name>
</gene>
<sequence>MVLSPADKTNVKAAWGKVGAHAGEYGAEALERMFLSFPTTKTYFPHFDLSHGSAQVKGHGKKVADALTNAVAHVDDMPNALSALSDLHAHKLRVDPVNFKLLSHCLLVTLAAHLPAEFTPAVHASLDKFLASVSTVLTSKYR</sequence>